<sequence>MSGNSIGQNFVVTTFGESHGVALGCIIDGCPPGLELTEADMQHDLDRRRPGTSRYTTARREPDEVRILSGVFEGKTTGTSIGLLIENTDQRSQDYSNIKDLFRPGHADYTYQQKYGLRDYRGGGRSSARETAMRVAAGAVAKKYLKQVHGISIQGYMSQLGPISAETLDFSQIEQNAFFFPDASKLEALDEYMRELKKSGDSIGAKISVVATGVPVGLGEPVFDRLDADIAHALMGINAVKGVEIGDGFGVVTQKGSEGRDLMSPLGFESNHAGGILGGISSGQPIVAHIALKPTSSISVPGQSMTAQGEMAEVVTKGRHDPCVGIRAVPIAEAMLAIVLMDHLLRHRAQNQDVRSHTPILGMR</sequence>
<comment type="function">
    <text evidence="1">Catalyzes the anti-1,4-elimination of the C-3 phosphate and the C-6 proR hydrogen from 5-enolpyruvylshikimate-3-phosphate (EPSP) to yield chorismate, which is the branch point compound that serves as the starting substrate for the three terminal pathways of aromatic amino acid biosynthesis. This reaction introduces a second double bond into the aromatic ring system.</text>
</comment>
<comment type="catalytic activity">
    <reaction evidence="1">
        <text>5-O-(1-carboxyvinyl)-3-phosphoshikimate = chorismate + phosphate</text>
        <dbReference type="Rhea" id="RHEA:21020"/>
        <dbReference type="ChEBI" id="CHEBI:29748"/>
        <dbReference type="ChEBI" id="CHEBI:43474"/>
        <dbReference type="ChEBI" id="CHEBI:57701"/>
        <dbReference type="EC" id="4.2.3.5"/>
    </reaction>
</comment>
<comment type="cofactor">
    <cofactor evidence="1">
        <name>FMNH2</name>
        <dbReference type="ChEBI" id="CHEBI:57618"/>
    </cofactor>
    <text evidence="1">Reduced FMN (FMNH(2)).</text>
</comment>
<comment type="pathway">
    <text evidence="1">Metabolic intermediate biosynthesis; chorismate biosynthesis; chorismate from D-erythrose 4-phosphate and phosphoenolpyruvate: step 7/7.</text>
</comment>
<comment type="subunit">
    <text evidence="1">Homotetramer.</text>
</comment>
<comment type="similarity">
    <text evidence="1">Belongs to the chorismate synthase family.</text>
</comment>
<organism>
    <name type="scientific">Shewanella sp. (strain ANA-3)</name>
    <dbReference type="NCBI Taxonomy" id="94122"/>
    <lineage>
        <taxon>Bacteria</taxon>
        <taxon>Pseudomonadati</taxon>
        <taxon>Pseudomonadota</taxon>
        <taxon>Gammaproteobacteria</taxon>
        <taxon>Alteromonadales</taxon>
        <taxon>Shewanellaceae</taxon>
        <taxon>Shewanella</taxon>
    </lineage>
</organism>
<name>AROC_SHESA</name>
<proteinExistence type="inferred from homology"/>
<gene>
    <name evidence="1" type="primary">aroC</name>
    <name type="ordered locus">Shewana3_1469</name>
</gene>
<feature type="chain" id="PRO_1000022551" description="Chorismate synthase">
    <location>
        <begin position="1"/>
        <end position="364"/>
    </location>
</feature>
<feature type="region of interest" description="Disordered" evidence="2">
    <location>
        <begin position="41"/>
        <end position="60"/>
    </location>
</feature>
<feature type="binding site" evidence="1">
    <location>
        <position position="48"/>
    </location>
    <ligand>
        <name>NADP(+)</name>
        <dbReference type="ChEBI" id="CHEBI:58349"/>
    </ligand>
</feature>
<feature type="binding site" evidence="1">
    <location>
        <position position="54"/>
    </location>
    <ligand>
        <name>NADP(+)</name>
        <dbReference type="ChEBI" id="CHEBI:58349"/>
    </ligand>
</feature>
<feature type="binding site" evidence="1">
    <location>
        <begin position="125"/>
        <end position="127"/>
    </location>
    <ligand>
        <name>FMN</name>
        <dbReference type="ChEBI" id="CHEBI:58210"/>
    </ligand>
</feature>
<feature type="binding site" evidence="1">
    <location>
        <begin position="238"/>
        <end position="239"/>
    </location>
    <ligand>
        <name>FMN</name>
        <dbReference type="ChEBI" id="CHEBI:58210"/>
    </ligand>
</feature>
<feature type="binding site" evidence="1">
    <location>
        <position position="278"/>
    </location>
    <ligand>
        <name>FMN</name>
        <dbReference type="ChEBI" id="CHEBI:58210"/>
    </ligand>
</feature>
<feature type="binding site" evidence="1">
    <location>
        <begin position="293"/>
        <end position="297"/>
    </location>
    <ligand>
        <name>FMN</name>
        <dbReference type="ChEBI" id="CHEBI:58210"/>
    </ligand>
</feature>
<feature type="binding site" evidence="1">
    <location>
        <position position="319"/>
    </location>
    <ligand>
        <name>FMN</name>
        <dbReference type="ChEBI" id="CHEBI:58210"/>
    </ligand>
</feature>
<dbReference type="EC" id="4.2.3.5" evidence="1"/>
<dbReference type="EMBL" id="CP000469">
    <property type="protein sequence ID" value="ABK47703.1"/>
    <property type="molecule type" value="Genomic_DNA"/>
</dbReference>
<dbReference type="RefSeq" id="WP_011716526.1">
    <property type="nucleotide sequence ID" value="NC_008577.1"/>
</dbReference>
<dbReference type="SMR" id="A0KV84"/>
<dbReference type="STRING" id="94122.Shewana3_1469"/>
<dbReference type="KEGG" id="shn:Shewana3_1469"/>
<dbReference type="eggNOG" id="COG0082">
    <property type="taxonomic scope" value="Bacteria"/>
</dbReference>
<dbReference type="HOGENOM" id="CLU_034547_0_2_6"/>
<dbReference type="OrthoDB" id="9771806at2"/>
<dbReference type="UniPathway" id="UPA00053">
    <property type="reaction ID" value="UER00090"/>
</dbReference>
<dbReference type="Proteomes" id="UP000002589">
    <property type="component" value="Chromosome"/>
</dbReference>
<dbReference type="GO" id="GO:0005829">
    <property type="term" value="C:cytosol"/>
    <property type="evidence" value="ECO:0007669"/>
    <property type="project" value="TreeGrafter"/>
</dbReference>
<dbReference type="GO" id="GO:0004107">
    <property type="term" value="F:chorismate synthase activity"/>
    <property type="evidence" value="ECO:0007669"/>
    <property type="project" value="UniProtKB-UniRule"/>
</dbReference>
<dbReference type="GO" id="GO:0010181">
    <property type="term" value="F:FMN binding"/>
    <property type="evidence" value="ECO:0007669"/>
    <property type="project" value="TreeGrafter"/>
</dbReference>
<dbReference type="GO" id="GO:0008652">
    <property type="term" value="P:amino acid biosynthetic process"/>
    <property type="evidence" value="ECO:0007669"/>
    <property type="project" value="UniProtKB-KW"/>
</dbReference>
<dbReference type="GO" id="GO:0009073">
    <property type="term" value="P:aromatic amino acid family biosynthetic process"/>
    <property type="evidence" value="ECO:0007669"/>
    <property type="project" value="UniProtKB-KW"/>
</dbReference>
<dbReference type="GO" id="GO:0009423">
    <property type="term" value="P:chorismate biosynthetic process"/>
    <property type="evidence" value="ECO:0007669"/>
    <property type="project" value="UniProtKB-UniRule"/>
</dbReference>
<dbReference type="CDD" id="cd07304">
    <property type="entry name" value="Chorismate_synthase"/>
    <property type="match status" value="1"/>
</dbReference>
<dbReference type="FunFam" id="3.60.150.10:FF:000001">
    <property type="entry name" value="Chorismate synthase"/>
    <property type="match status" value="1"/>
</dbReference>
<dbReference type="Gene3D" id="3.60.150.10">
    <property type="entry name" value="Chorismate synthase AroC"/>
    <property type="match status" value="1"/>
</dbReference>
<dbReference type="HAMAP" id="MF_00300">
    <property type="entry name" value="Chorismate_synth"/>
    <property type="match status" value="1"/>
</dbReference>
<dbReference type="InterPro" id="IPR000453">
    <property type="entry name" value="Chorismate_synth"/>
</dbReference>
<dbReference type="InterPro" id="IPR035904">
    <property type="entry name" value="Chorismate_synth_AroC_sf"/>
</dbReference>
<dbReference type="InterPro" id="IPR020541">
    <property type="entry name" value="Chorismate_synthase_CS"/>
</dbReference>
<dbReference type="NCBIfam" id="TIGR00033">
    <property type="entry name" value="aroC"/>
    <property type="match status" value="1"/>
</dbReference>
<dbReference type="NCBIfam" id="NF003793">
    <property type="entry name" value="PRK05382.1"/>
    <property type="match status" value="1"/>
</dbReference>
<dbReference type="PANTHER" id="PTHR21085">
    <property type="entry name" value="CHORISMATE SYNTHASE"/>
    <property type="match status" value="1"/>
</dbReference>
<dbReference type="PANTHER" id="PTHR21085:SF0">
    <property type="entry name" value="CHORISMATE SYNTHASE"/>
    <property type="match status" value="1"/>
</dbReference>
<dbReference type="Pfam" id="PF01264">
    <property type="entry name" value="Chorismate_synt"/>
    <property type="match status" value="1"/>
</dbReference>
<dbReference type="PIRSF" id="PIRSF001456">
    <property type="entry name" value="Chorismate_synth"/>
    <property type="match status" value="1"/>
</dbReference>
<dbReference type="SUPFAM" id="SSF103263">
    <property type="entry name" value="Chorismate synthase, AroC"/>
    <property type="match status" value="1"/>
</dbReference>
<dbReference type="PROSITE" id="PS00787">
    <property type="entry name" value="CHORISMATE_SYNTHASE_1"/>
    <property type="match status" value="1"/>
</dbReference>
<dbReference type="PROSITE" id="PS00788">
    <property type="entry name" value="CHORISMATE_SYNTHASE_2"/>
    <property type="match status" value="1"/>
</dbReference>
<dbReference type="PROSITE" id="PS00789">
    <property type="entry name" value="CHORISMATE_SYNTHASE_3"/>
    <property type="match status" value="1"/>
</dbReference>
<keyword id="KW-0028">Amino-acid biosynthesis</keyword>
<keyword id="KW-0057">Aromatic amino acid biosynthesis</keyword>
<keyword id="KW-0274">FAD</keyword>
<keyword id="KW-0285">Flavoprotein</keyword>
<keyword id="KW-0288">FMN</keyword>
<keyword id="KW-0456">Lyase</keyword>
<keyword id="KW-0521">NADP</keyword>
<protein>
    <recommendedName>
        <fullName evidence="1">Chorismate synthase</fullName>
        <shortName evidence="1">CS</shortName>
        <ecNumber evidence="1">4.2.3.5</ecNumber>
    </recommendedName>
    <alternativeName>
        <fullName evidence="1">5-enolpyruvylshikimate-3-phosphate phospholyase</fullName>
    </alternativeName>
</protein>
<evidence type="ECO:0000255" key="1">
    <source>
        <dbReference type="HAMAP-Rule" id="MF_00300"/>
    </source>
</evidence>
<evidence type="ECO:0000256" key="2">
    <source>
        <dbReference type="SAM" id="MobiDB-lite"/>
    </source>
</evidence>
<accession>A0KV84</accession>
<reference key="1">
    <citation type="submission" date="2006-09" db="EMBL/GenBank/DDBJ databases">
        <title>Complete sequence of chromosome 1 of Shewanella sp. ANA-3.</title>
        <authorList>
            <person name="Copeland A."/>
            <person name="Lucas S."/>
            <person name="Lapidus A."/>
            <person name="Barry K."/>
            <person name="Detter J.C."/>
            <person name="Glavina del Rio T."/>
            <person name="Hammon N."/>
            <person name="Israni S."/>
            <person name="Dalin E."/>
            <person name="Tice H."/>
            <person name="Pitluck S."/>
            <person name="Chertkov O."/>
            <person name="Brettin T."/>
            <person name="Bruce D."/>
            <person name="Han C."/>
            <person name="Tapia R."/>
            <person name="Gilna P."/>
            <person name="Schmutz J."/>
            <person name="Larimer F."/>
            <person name="Land M."/>
            <person name="Hauser L."/>
            <person name="Kyrpides N."/>
            <person name="Kim E."/>
            <person name="Newman D."/>
            <person name="Salticov C."/>
            <person name="Konstantinidis K."/>
            <person name="Klappenback J."/>
            <person name="Tiedje J."/>
            <person name="Richardson P."/>
        </authorList>
    </citation>
    <scope>NUCLEOTIDE SEQUENCE [LARGE SCALE GENOMIC DNA]</scope>
    <source>
        <strain>ANA-3</strain>
    </source>
</reference>